<organism>
    <name type="scientific">Homo sapiens</name>
    <name type="common">Human</name>
    <dbReference type="NCBI Taxonomy" id="9606"/>
    <lineage>
        <taxon>Eukaryota</taxon>
        <taxon>Metazoa</taxon>
        <taxon>Chordata</taxon>
        <taxon>Craniata</taxon>
        <taxon>Vertebrata</taxon>
        <taxon>Euteleostomi</taxon>
        <taxon>Mammalia</taxon>
        <taxon>Eutheria</taxon>
        <taxon>Euarchontoglires</taxon>
        <taxon>Primates</taxon>
        <taxon>Haplorrhini</taxon>
        <taxon>Catarrhini</taxon>
        <taxon>Hominidae</taxon>
        <taxon>Homo</taxon>
    </lineage>
</organism>
<reference key="1">
    <citation type="journal article" date="2004" name="Nat. Genet.">
        <title>Complete sequencing and characterization of 21,243 full-length human cDNAs.</title>
        <authorList>
            <person name="Ota T."/>
            <person name="Suzuki Y."/>
            <person name="Nishikawa T."/>
            <person name="Otsuki T."/>
            <person name="Sugiyama T."/>
            <person name="Irie R."/>
            <person name="Wakamatsu A."/>
            <person name="Hayashi K."/>
            <person name="Sato H."/>
            <person name="Nagai K."/>
            <person name="Kimura K."/>
            <person name="Makita H."/>
            <person name="Sekine M."/>
            <person name="Obayashi M."/>
            <person name="Nishi T."/>
            <person name="Shibahara T."/>
            <person name="Tanaka T."/>
            <person name="Ishii S."/>
            <person name="Yamamoto J."/>
            <person name="Saito K."/>
            <person name="Kawai Y."/>
            <person name="Isono Y."/>
            <person name="Nakamura Y."/>
            <person name="Nagahari K."/>
            <person name="Murakami K."/>
            <person name="Yasuda T."/>
            <person name="Iwayanagi T."/>
            <person name="Wagatsuma M."/>
            <person name="Shiratori A."/>
            <person name="Sudo H."/>
            <person name="Hosoiri T."/>
            <person name="Kaku Y."/>
            <person name="Kodaira H."/>
            <person name="Kondo H."/>
            <person name="Sugawara M."/>
            <person name="Takahashi M."/>
            <person name="Kanda K."/>
            <person name="Yokoi T."/>
            <person name="Furuya T."/>
            <person name="Kikkawa E."/>
            <person name="Omura Y."/>
            <person name="Abe K."/>
            <person name="Kamihara K."/>
            <person name="Katsuta N."/>
            <person name="Sato K."/>
            <person name="Tanikawa M."/>
            <person name="Yamazaki M."/>
            <person name="Ninomiya K."/>
            <person name="Ishibashi T."/>
            <person name="Yamashita H."/>
            <person name="Murakawa K."/>
            <person name="Fujimori K."/>
            <person name="Tanai H."/>
            <person name="Kimata M."/>
            <person name="Watanabe M."/>
            <person name="Hiraoka S."/>
            <person name="Chiba Y."/>
            <person name="Ishida S."/>
            <person name="Ono Y."/>
            <person name="Takiguchi S."/>
            <person name="Watanabe S."/>
            <person name="Yosida M."/>
            <person name="Hotuta T."/>
            <person name="Kusano J."/>
            <person name="Kanehori K."/>
            <person name="Takahashi-Fujii A."/>
            <person name="Hara H."/>
            <person name="Tanase T.-O."/>
            <person name="Nomura Y."/>
            <person name="Togiya S."/>
            <person name="Komai F."/>
            <person name="Hara R."/>
            <person name="Takeuchi K."/>
            <person name="Arita M."/>
            <person name="Imose N."/>
            <person name="Musashino K."/>
            <person name="Yuuki H."/>
            <person name="Oshima A."/>
            <person name="Sasaki N."/>
            <person name="Aotsuka S."/>
            <person name="Yoshikawa Y."/>
            <person name="Matsunawa H."/>
            <person name="Ichihara T."/>
            <person name="Shiohata N."/>
            <person name="Sano S."/>
            <person name="Moriya S."/>
            <person name="Momiyama H."/>
            <person name="Satoh N."/>
            <person name="Takami S."/>
            <person name="Terashima Y."/>
            <person name="Suzuki O."/>
            <person name="Nakagawa S."/>
            <person name="Senoh A."/>
            <person name="Mizoguchi H."/>
            <person name="Goto Y."/>
            <person name="Shimizu F."/>
            <person name="Wakebe H."/>
            <person name="Hishigaki H."/>
            <person name="Watanabe T."/>
            <person name="Sugiyama A."/>
            <person name="Takemoto M."/>
            <person name="Kawakami B."/>
            <person name="Yamazaki M."/>
            <person name="Watanabe K."/>
            <person name="Kumagai A."/>
            <person name="Itakura S."/>
            <person name="Fukuzumi Y."/>
            <person name="Fujimori Y."/>
            <person name="Komiyama M."/>
            <person name="Tashiro H."/>
            <person name="Tanigami A."/>
            <person name="Fujiwara T."/>
            <person name="Ono T."/>
            <person name="Yamada K."/>
            <person name="Fujii Y."/>
            <person name="Ozaki K."/>
            <person name="Hirao M."/>
            <person name="Ohmori Y."/>
            <person name="Kawabata A."/>
            <person name="Hikiji T."/>
            <person name="Kobatake N."/>
            <person name="Inagaki H."/>
            <person name="Ikema Y."/>
            <person name="Okamoto S."/>
            <person name="Okitani R."/>
            <person name="Kawakami T."/>
            <person name="Noguchi S."/>
            <person name="Itoh T."/>
            <person name="Shigeta K."/>
            <person name="Senba T."/>
            <person name="Matsumura K."/>
            <person name="Nakajima Y."/>
            <person name="Mizuno T."/>
            <person name="Morinaga M."/>
            <person name="Sasaki M."/>
            <person name="Togashi T."/>
            <person name="Oyama M."/>
            <person name="Hata H."/>
            <person name="Watanabe M."/>
            <person name="Komatsu T."/>
            <person name="Mizushima-Sugano J."/>
            <person name="Satoh T."/>
            <person name="Shirai Y."/>
            <person name="Takahashi Y."/>
            <person name="Nakagawa K."/>
            <person name="Okumura K."/>
            <person name="Nagase T."/>
            <person name="Nomura N."/>
            <person name="Kikuchi H."/>
            <person name="Masuho Y."/>
            <person name="Yamashita R."/>
            <person name="Nakai K."/>
            <person name="Yada T."/>
            <person name="Nakamura Y."/>
            <person name="Ohara O."/>
            <person name="Isogai T."/>
            <person name="Sugano S."/>
        </authorList>
    </citation>
    <scope>NUCLEOTIDE SEQUENCE [LARGE SCALE MRNA]</scope>
    <source>
        <tissue>Cerebellum</tissue>
        <tissue>Tongue</tissue>
    </source>
</reference>
<reference key="2">
    <citation type="journal article" date="2003" name="Nature">
        <title>The DNA sequence of human chromosome 7.</title>
        <authorList>
            <person name="Hillier L.W."/>
            <person name="Fulton R.S."/>
            <person name="Fulton L.A."/>
            <person name="Graves T.A."/>
            <person name="Pepin K.H."/>
            <person name="Wagner-McPherson C."/>
            <person name="Layman D."/>
            <person name="Maas J."/>
            <person name="Jaeger S."/>
            <person name="Walker R."/>
            <person name="Wylie K."/>
            <person name="Sekhon M."/>
            <person name="Becker M.C."/>
            <person name="O'Laughlin M.D."/>
            <person name="Schaller M.E."/>
            <person name="Fewell G.A."/>
            <person name="Delehaunty K.D."/>
            <person name="Miner T.L."/>
            <person name="Nash W.E."/>
            <person name="Cordes M."/>
            <person name="Du H."/>
            <person name="Sun H."/>
            <person name="Edwards J."/>
            <person name="Bradshaw-Cordum H."/>
            <person name="Ali J."/>
            <person name="Andrews S."/>
            <person name="Isak A."/>
            <person name="Vanbrunt A."/>
            <person name="Nguyen C."/>
            <person name="Du F."/>
            <person name="Lamar B."/>
            <person name="Courtney L."/>
            <person name="Kalicki J."/>
            <person name="Ozersky P."/>
            <person name="Bielicki L."/>
            <person name="Scott K."/>
            <person name="Holmes A."/>
            <person name="Harkins R."/>
            <person name="Harris A."/>
            <person name="Strong C.M."/>
            <person name="Hou S."/>
            <person name="Tomlinson C."/>
            <person name="Dauphin-Kohlberg S."/>
            <person name="Kozlowicz-Reilly A."/>
            <person name="Leonard S."/>
            <person name="Rohlfing T."/>
            <person name="Rock S.M."/>
            <person name="Tin-Wollam A.-M."/>
            <person name="Abbott A."/>
            <person name="Minx P."/>
            <person name="Maupin R."/>
            <person name="Strowmatt C."/>
            <person name="Latreille P."/>
            <person name="Miller N."/>
            <person name="Johnson D."/>
            <person name="Murray J."/>
            <person name="Woessner J.P."/>
            <person name="Wendl M.C."/>
            <person name="Yang S.-P."/>
            <person name="Schultz B.R."/>
            <person name="Wallis J.W."/>
            <person name="Spieth J."/>
            <person name="Bieri T.A."/>
            <person name="Nelson J.O."/>
            <person name="Berkowicz N."/>
            <person name="Wohldmann P.E."/>
            <person name="Cook L.L."/>
            <person name="Hickenbotham M.T."/>
            <person name="Eldred J."/>
            <person name="Williams D."/>
            <person name="Bedell J.A."/>
            <person name="Mardis E.R."/>
            <person name="Clifton S.W."/>
            <person name="Chissoe S.L."/>
            <person name="Marra M.A."/>
            <person name="Raymond C."/>
            <person name="Haugen E."/>
            <person name="Gillett W."/>
            <person name="Zhou Y."/>
            <person name="James R."/>
            <person name="Phelps K."/>
            <person name="Iadanoto S."/>
            <person name="Bubb K."/>
            <person name="Simms E."/>
            <person name="Levy R."/>
            <person name="Clendenning J."/>
            <person name="Kaul R."/>
            <person name="Kent W.J."/>
            <person name="Furey T.S."/>
            <person name="Baertsch R.A."/>
            <person name="Brent M.R."/>
            <person name="Keibler E."/>
            <person name="Flicek P."/>
            <person name="Bork P."/>
            <person name="Suyama M."/>
            <person name="Bailey J.A."/>
            <person name="Portnoy M.E."/>
            <person name="Torrents D."/>
            <person name="Chinwalla A.T."/>
            <person name="Gish W.R."/>
            <person name="Eddy S.R."/>
            <person name="McPherson J.D."/>
            <person name="Olson M.V."/>
            <person name="Eichler E.E."/>
            <person name="Green E.D."/>
            <person name="Waterston R.H."/>
            <person name="Wilson R.K."/>
        </authorList>
    </citation>
    <scope>NUCLEOTIDE SEQUENCE [LARGE SCALE GENOMIC DNA]</scope>
</reference>
<reference key="3">
    <citation type="journal article" date="2003" name="Science">
        <title>Human chromosome 7: DNA sequence and biology.</title>
        <authorList>
            <person name="Scherer S.W."/>
            <person name="Cheung J."/>
            <person name="MacDonald J.R."/>
            <person name="Osborne L.R."/>
            <person name="Nakabayashi K."/>
            <person name="Herbrick J.-A."/>
            <person name="Carson A.R."/>
            <person name="Parker-Katiraee L."/>
            <person name="Skaug J."/>
            <person name="Khaja R."/>
            <person name="Zhang J."/>
            <person name="Hudek A.K."/>
            <person name="Li M."/>
            <person name="Haddad M."/>
            <person name="Duggan G.E."/>
            <person name="Fernandez B.A."/>
            <person name="Kanematsu E."/>
            <person name="Gentles S."/>
            <person name="Christopoulos C.C."/>
            <person name="Choufani S."/>
            <person name="Kwasnicka D."/>
            <person name="Zheng X.H."/>
            <person name="Lai Z."/>
            <person name="Nusskern D.R."/>
            <person name="Zhang Q."/>
            <person name="Gu Z."/>
            <person name="Lu F."/>
            <person name="Zeesman S."/>
            <person name="Nowaczyk M.J."/>
            <person name="Teshima I."/>
            <person name="Chitayat D."/>
            <person name="Shuman C."/>
            <person name="Weksberg R."/>
            <person name="Zackai E.H."/>
            <person name="Grebe T.A."/>
            <person name="Cox S.R."/>
            <person name="Kirkpatrick S.J."/>
            <person name="Rahman N."/>
            <person name="Friedman J.M."/>
            <person name="Heng H.H.Q."/>
            <person name="Pelicci P.G."/>
            <person name="Lo-Coco F."/>
            <person name="Belloni E."/>
            <person name="Shaffer L.G."/>
            <person name="Pober B."/>
            <person name="Morton C.C."/>
            <person name="Gusella J.F."/>
            <person name="Bruns G.A.P."/>
            <person name="Korf B.R."/>
            <person name="Quade B.J."/>
            <person name="Ligon A.H."/>
            <person name="Ferguson H."/>
            <person name="Higgins A.W."/>
            <person name="Leach N.T."/>
            <person name="Herrick S.R."/>
            <person name="Lemyre E."/>
            <person name="Farra C.G."/>
            <person name="Kim H.-G."/>
            <person name="Summers A.M."/>
            <person name="Gripp K.W."/>
            <person name="Roberts W."/>
            <person name="Szatmari P."/>
            <person name="Winsor E.J.T."/>
            <person name="Grzeschik K.-H."/>
            <person name="Teebi A."/>
            <person name="Minassian B.A."/>
            <person name="Kere J."/>
            <person name="Armengol L."/>
            <person name="Pujana M.A."/>
            <person name="Estivill X."/>
            <person name="Wilson M.D."/>
            <person name="Koop B.F."/>
            <person name="Tosi S."/>
            <person name="Moore G.E."/>
            <person name="Boright A.P."/>
            <person name="Zlotorynski E."/>
            <person name="Kerem B."/>
            <person name="Kroisel P.M."/>
            <person name="Petek E."/>
            <person name="Oscier D.G."/>
            <person name="Mould S.J."/>
            <person name="Doehner H."/>
            <person name="Doehner K."/>
            <person name="Rommens J.M."/>
            <person name="Vincent J.B."/>
            <person name="Venter J.C."/>
            <person name="Li P.W."/>
            <person name="Mural R.J."/>
            <person name="Adams M.D."/>
            <person name="Tsui L.-C."/>
        </authorList>
    </citation>
    <scope>NUCLEOTIDE SEQUENCE [LARGE SCALE GENOMIC DNA]</scope>
</reference>
<reference key="4">
    <citation type="submission" date="2005-07" db="EMBL/GenBank/DDBJ databases">
        <authorList>
            <person name="Mural R.J."/>
            <person name="Istrail S."/>
            <person name="Sutton G."/>
            <person name="Florea L."/>
            <person name="Halpern A.L."/>
            <person name="Mobarry C.M."/>
            <person name="Lippert R."/>
            <person name="Walenz B."/>
            <person name="Shatkay H."/>
            <person name="Dew I."/>
            <person name="Miller J.R."/>
            <person name="Flanigan M.J."/>
            <person name="Edwards N.J."/>
            <person name="Bolanos R."/>
            <person name="Fasulo D."/>
            <person name="Halldorsson B.V."/>
            <person name="Hannenhalli S."/>
            <person name="Turner R."/>
            <person name="Yooseph S."/>
            <person name="Lu F."/>
            <person name="Nusskern D.R."/>
            <person name="Shue B.C."/>
            <person name="Zheng X.H."/>
            <person name="Zhong F."/>
            <person name="Delcher A.L."/>
            <person name="Huson D.H."/>
            <person name="Kravitz S.A."/>
            <person name="Mouchard L."/>
            <person name="Reinert K."/>
            <person name="Remington K.A."/>
            <person name="Clark A.G."/>
            <person name="Waterman M.S."/>
            <person name="Eichler E.E."/>
            <person name="Adams M.D."/>
            <person name="Hunkapiller M.W."/>
            <person name="Myers E.W."/>
            <person name="Venter J.C."/>
        </authorList>
    </citation>
    <scope>NUCLEOTIDE SEQUENCE [LARGE SCALE GENOMIC DNA]</scope>
</reference>
<reference key="5">
    <citation type="journal article" date="2004" name="Genome Res.">
        <title>The status, quality, and expansion of the NIH full-length cDNA project: the Mammalian Gene Collection (MGC).</title>
        <authorList>
            <consortium name="The MGC Project Team"/>
        </authorList>
    </citation>
    <scope>NUCLEOTIDE SEQUENCE [LARGE SCALE MRNA]</scope>
    <source>
        <tissue>Eye</tissue>
    </source>
</reference>
<reference key="6">
    <citation type="journal article" date="2006" name="Electrophoresis">
        <title>Alterations of the mitochondrial proteome caused by the absence of mitochondrial DNA: A proteomic view.</title>
        <authorList>
            <person name="Chevallet M."/>
            <person name="Lescuyer P."/>
            <person name="Diemer H."/>
            <person name="van Dorsselaer A."/>
            <person name="Leize-Wagner E."/>
            <person name="Rabilloud T."/>
        </authorList>
    </citation>
    <scope>SUBCELLULAR LOCATION</scope>
</reference>
<reference key="7">
    <citation type="journal article" date="2011" name="BMC Syst. Biol.">
        <title>Initial characterization of the human central proteome.</title>
        <authorList>
            <person name="Burkard T.R."/>
            <person name="Planyavsky M."/>
            <person name="Kaupe I."/>
            <person name="Breitwieser F.P."/>
            <person name="Buerckstuemmer T."/>
            <person name="Bennett K.L."/>
            <person name="Superti-Furga G."/>
            <person name="Colinge J."/>
        </authorList>
    </citation>
    <scope>IDENTIFICATION BY MASS SPECTROMETRY [LARGE SCALE ANALYSIS]</scope>
</reference>
<reference key="8">
    <citation type="journal article" date="2012" name="Nucleic Acids Res.">
        <title>C7orf30 is necessary for biogenesis of the large subunit of the mitochondrial ribosome.</title>
        <authorList>
            <person name="Rorbach J."/>
            <person name="Gammage P.A."/>
            <person name="Minczuk M."/>
        </authorList>
    </citation>
    <scope>SUBCELLULAR LOCATION</scope>
    <scope>FUNCTION</scope>
    <scope>ASSOCIATION WITH MITOCHONDRIAL RIBOSOME LARGE SUBUNIT</scope>
</reference>
<reference key="9">
    <citation type="journal article" date="2012" name="Nucleic Acids Res.">
        <title>C7orf30 specifically associates with the large subunit of the mitochondrial ribosome and is involved in translation.</title>
        <authorList>
            <person name="Wanschers B.F."/>
            <person name="Szklarczyk R."/>
            <person name="Pajak A."/>
            <person name="van den Brand M.A."/>
            <person name="Gloerich J."/>
            <person name="Rodenburg R.J."/>
            <person name="Lightowlers R.N."/>
            <person name="Nijtmans L.G."/>
            <person name="Huynen M.A."/>
        </authorList>
    </citation>
    <scope>SUBCELLULAR LOCATION</scope>
    <scope>INTERACTION WITH MRPL12</scope>
    <scope>FUNCTION</scope>
</reference>
<reference key="10">
    <citation type="journal article" date="2012" name="PLoS Genet.">
        <title>RsfA (YbeB) proteins are conserved ribosomal silencing factors.</title>
        <authorList>
            <person name="Hauser R."/>
            <person name="Pech M."/>
            <person name="Kijek J."/>
            <person name="Yamamoto H."/>
            <person name="Titz B."/>
            <person name="Naeve F."/>
            <person name="Tovchigrechko A."/>
            <person name="Yamamoto K."/>
            <person name="Szaflarski W."/>
            <person name="Takeuchi N."/>
            <person name="Stellberger T."/>
            <person name="Diefenbacher M.E."/>
            <person name="Nierhaus K.H."/>
            <person name="Uetz P."/>
        </authorList>
    </citation>
    <scope>POSSIBLE FUNCTION IN RIBOSOMAL SILENCING</scope>
    <scope>SUBCELLULAR LOCATION</scope>
    <scope>INTERACTION WITH MRPL14</scope>
</reference>
<reference key="11">
    <citation type="journal article" date="2013" name="Mol. Biol. Cell">
        <title>The conserved interaction of C7orf30 with MRPL14 promotes biogenesis of the mitochondrial large ribosomal subunit and mitochondrial translation.</title>
        <authorList>
            <person name="Fung S."/>
            <person name="Nishimura T."/>
            <person name="Sasarman F."/>
            <person name="Shoubridge E.A."/>
        </authorList>
    </citation>
    <scope>FUNCTION</scope>
    <scope>SUBCELLULAR LOCATION</scope>
    <scope>SUBUNIT</scope>
    <scope>INTERACTION WITH MRPL14</scope>
</reference>
<reference key="12">
    <citation type="journal article" date="2015" name="Proteomics">
        <title>N-terminome analysis of the human mitochondrial proteome.</title>
        <authorList>
            <person name="Vaca Jacome A.S."/>
            <person name="Rabilloud T."/>
            <person name="Schaeffer-Reiss C."/>
            <person name="Rompais M."/>
            <person name="Ayoub D."/>
            <person name="Lane L."/>
            <person name="Bairoch A."/>
            <person name="Van Dorsselaer A."/>
            <person name="Carapito C."/>
        </authorList>
    </citation>
    <scope>IDENTIFICATION BY MASS SPECTROMETRY [LARGE SCALE ANALYSIS]</scope>
</reference>
<reference key="13">
    <citation type="journal article" date="2018" name="Biochemistry">
        <title>MIEF1 microprotein regulates mitochondrial translation.</title>
        <authorList>
            <person name="Rathore A."/>
            <person name="Chu Q."/>
            <person name="Tan D."/>
            <person name="Martinez T.F."/>
            <person name="Donaldson C.J."/>
            <person name="Diedrich J.K."/>
            <person name="Yates J.R. III"/>
            <person name="Saghatelian A."/>
        </authorList>
    </citation>
    <scope>SUBUNIT</scope>
</reference>
<reference key="14">
    <citation type="journal article" date="2020" name="Mol. Cell. Proteomics">
        <title>The mitochondrial acyl-carrier protein interaction network highlights important roles for LYRM family members in complex I and mitoribosome assembly.</title>
        <authorList>
            <person name="Dibley M.G."/>
            <person name="Formosa L.E."/>
            <person name="Lyu B."/>
            <person name="Reljic B."/>
            <person name="McGann D."/>
            <person name="Muellner-Wong L."/>
            <person name="Kraus F."/>
            <person name="Sharpe A.J."/>
            <person name="Stroud D.A."/>
            <person name="Ryan M.T."/>
        </authorList>
    </citation>
    <scope>SUBUNIT</scope>
</reference>
<reference evidence="14 15" key="15">
    <citation type="journal article" date="2017" name="Nat. Struct. Mol. Biol.">
        <title>Structures of the human mitochondrial ribosome in native states of assembly.</title>
        <authorList>
            <person name="Brown A."/>
            <person name="Rathore S."/>
            <person name="Kimanius D."/>
            <person name="Aibara S."/>
            <person name="Bai X.C."/>
            <person name="Rorbach J."/>
            <person name="Amunts A."/>
            <person name="Ramakrishnan V."/>
        </authorList>
    </citation>
    <scope>STRUCTURE BY ELECTRON MICROSCOPY (3.03 ANGSTROMS)</scope>
    <scope>IDENTIFICATION BY MASS SPECTROMETRY</scope>
    <scope>FUNCTION</scope>
    <scope>SUBCELLULAR LOCATION</scope>
    <scope>SUBUNIT</scope>
</reference>
<reference evidence="16 17" key="16">
    <citation type="journal article" date="2022" name="Nat. Commun.">
        <title>A late-stage assembly checkpoint of the human mitochondrial ribosome large subunit.</title>
        <authorList>
            <person name="Rebelo-Guiomar P."/>
            <person name="Pellegrino S."/>
            <person name="Dent K.C."/>
            <person name="Sas-Chen A."/>
            <person name="Miller-Fleming L."/>
            <person name="Garone C."/>
            <person name="Van Haute L."/>
            <person name="Rogan J.F."/>
            <person name="Dinan A."/>
            <person name="Firth A.E."/>
            <person name="Andrews B."/>
            <person name="Whitworth A.J."/>
            <person name="Schwartz S."/>
            <person name="Warren A.J."/>
            <person name="Minczuk M."/>
        </authorList>
    </citation>
    <scope>STRUCTURE BY ELECTRON MICROSCOPY (2.9 ANGSTROMS) IN COMPLEX WITH MTLSU</scope>
    <scope>SUBUNIT</scope>
</reference>
<dbReference type="EMBL" id="AK316559">
    <property type="protein sequence ID" value="BAG38148.1"/>
    <property type="molecule type" value="mRNA"/>
</dbReference>
<dbReference type="EMBL" id="AK127742">
    <property type="protein sequence ID" value="BAG54562.1"/>
    <property type="molecule type" value="mRNA"/>
</dbReference>
<dbReference type="EMBL" id="AC005082">
    <property type="status" value="NOT_ANNOTATED_CDS"/>
    <property type="molecule type" value="Genomic_DNA"/>
</dbReference>
<dbReference type="EMBL" id="CH236948">
    <property type="protein sequence ID" value="EAL24258.1"/>
    <property type="molecule type" value="Genomic_DNA"/>
</dbReference>
<dbReference type="EMBL" id="CH471073">
    <property type="protein sequence ID" value="EAW93785.1"/>
    <property type="molecule type" value="Genomic_DNA"/>
</dbReference>
<dbReference type="EMBL" id="BC012331">
    <property type="protein sequence ID" value="AAH12331.1"/>
    <property type="molecule type" value="mRNA"/>
</dbReference>
<dbReference type="CCDS" id="CCDS5381.1"/>
<dbReference type="RefSeq" id="NP_612455.1">
    <property type="nucleotide sequence ID" value="NM_138446.2"/>
</dbReference>
<dbReference type="PDB" id="5OOL">
    <property type="method" value="EM"/>
    <property type="resolution" value="3.06 A"/>
    <property type="chains" value="u=1-234"/>
</dbReference>
<dbReference type="PDB" id="5OOM">
    <property type="method" value="EM"/>
    <property type="resolution" value="3.03 A"/>
    <property type="chains" value="u=1-234"/>
</dbReference>
<dbReference type="PDB" id="7A5H">
    <property type="method" value="EM"/>
    <property type="resolution" value="3.30 A"/>
    <property type="chains" value="u=1-234"/>
</dbReference>
<dbReference type="PDB" id="7A5J">
    <property type="method" value="EM"/>
    <property type="resolution" value="3.10 A"/>
    <property type="chains" value="u=1-234"/>
</dbReference>
<dbReference type="PDB" id="7O9K">
    <property type="method" value="EM"/>
    <property type="resolution" value="3.10 A"/>
    <property type="chains" value="u=1-234"/>
</dbReference>
<dbReference type="PDB" id="7O9M">
    <property type="method" value="EM"/>
    <property type="resolution" value="2.50 A"/>
    <property type="chains" value="u=1-234"/>
</dbReference>
<dbReference type="PDB" id="7ODR">
    <property type="method" value="EM"/>
    <property type="resolution" value="2.90 A"/>
    <property type="chains" value="u=1-234"/>
</dbReference>
<dbReference type="PDB" id="7ODS">
    <property type="method" value="EM"/>
    <property type="resolution" value="3.10 A"/>
    <property type="chains" value="u=1-234"/>
</dbReference>
<dbReference type="PDB" id="7ODT">
    <property type="method" value="EM"/>
    <property type="resolution" value="3.10 A"/>
    <property type="chains" value="u=1-234"/>
</dbReference>
<dbReference type="PDB" id="7OF0">
    <property type="method" value="EM"/>
    <property type="resolution" value="2.20 A"/>
    <property type="chains" value="u=1-234"/>
</dbReference>
<dbReference type="PDB" id="7OF2">
    <property type="method" value="EM"/>
    <property type="resolution" value="2.70 A"/>
    <property type="chains" value="u=1-234"/>
</dbReference>
<dbReference type="PDB" id="7OF3">
    <property type="method" value="EM"/>
    <property type="resolution" value="2.70 A"/>
    <property type="chains" value="u=1-234"/>
</dbReference>
<dbReference type="PDB" id="7OF5">
    <property type="method" value="EM"/>
    <property type="resolution" value="2.90 A"/>
    <property type="chains" value="u=1-234"/>
</dbReference>
<dbReference type="PDB" id="7OF7">
    <property type="method" value="EM"/>
    <property type="resolution" value="2.50 A"/>
    <property type="chains" value="u=1-234"/>
</dbReference>
<dbReference type="PDB" id="7OI6">
    <property type="method" value="EM"/>
    <property type="resolution" value="5.70 A"/>
    <property type="chains" value="u=1-234"/>
</dbReference>
<dbReference type="PDB" id="7OI7">
    <property type="method" value="EM"/>
    <property type="resolution" value="3.50 A"/>
    <property type="chains" value="u=1-234"/>
</dbReference>
<dbReference type="PDB" id="7OI8">
    <property type="method" value="EM"/>
    <property type="resolution" value="3.50 A"/>
    <property type="chains" value="u=1-234"/>
</dbReference>
<dbReference type="PDB" id="7OI9">
    <property type="method" value="EM"/>
    <property type="resolution" value="3.30 A"/>
    <property type="chains" value="u=1-234"/>
</dbReference>
<dbReference type="PDB" id="7OIC">
    <property type="method" value="EM"/>
    <property type="resolution" value="3.10 A"/>
    <property type="chains" value="u=1-234"/>
</dbReference>
<dbReference type="PDB" id="7OID">
    <property type="method" value="EM"/>
    <property type="resolution" value="3.70 A"/>
    <property type="chains" value="u=1-234"/>
</dbReference>
<dbReference type="PDB" id="7OIE">
    <property type="method" value="EM"/>
    <property type="resolution" value="3.50 A"/>
    <property type="chains" value="u=1-234"/>
</dbReference>
<dbReference type="PDB" id="7PD3">
    <property type="method" value="EM"/>
    <property type="resolution" value="3.40 A"/>
    <property type="chains" value="u=1-234"/>
</dbReference>
<dbReference type="PDB" id="7PO4">
    <property type="method" value="EM"/>
    <property type="resolution" value="2.56 A"/>
    <property type="chains" value="za=1-234"/>
</dbReference>
<dbReference type="PDB" id="7QH6">
    <property type="method" value="EM"/>
    <property type="resolution" value="3.08 A"/>
    <property type="chains" value="u=1-234"/>
</dbReference>
<dbReference type="PDB" id="7QH7">
    <property type="method" value="EM"/>
    <property type="resolution" value="2.89 A"/>
    <property type="chains" value="u=91-201"/>
</dbReference>
<dbReference type="PDB" id="8K2B">
    <property type="method" value="EM"/>
    <property type="resolution" value="3.40 A"/>
    <property type="chains" value="u=1-234"/>
</dbReference>
<dbReference type="PDB" id="8PK0">
    <property type="method" value="EM"/>
    <property type="resolution" value="3.03 A"/>
    <property type="chains" value="u=1-234"/>
</dbReference>
<dbReference type="PDB" id="8QSJ">
    <property type="method" value="EM"/>
    <property type="resolution" value="3.00 A"/>
    <property type="chains" value="u=1-234"/>
</dbReference>
<dbReference type="PDB" id="8QU5">
    <property type="method" value="EM"/>
    <property type="resolution" value="2.42 A"/>
    <property type="chains" value="u=1-234"/>
</dbReference>
<dbReference type="PDBsum" id="5OOL"/>
<dbReference type="PDBsum" id="5OOM"/>
<dbReference type="PDBsum" id="7A5H"/>
<dbReference type="PDBsum" id="7A5J"/>
<dbReference type="PDBsum" id="7O9K"/>
<dbReference type="PDBsum" id="7O9M"/>
<dbReference type="PDBsum" id="7ODR"/>
<dbReference type="PDBsum" id="7ODS"/>
<dbReference type="PDBsum" id="7ODT"/>
<dbReference type="PDBsum" id="7OF0"/>
<dbReference type="PDBsum" id="7OF2"/>
<dbReference type="PDBsum" id="7OF3"/>
<dbReference type="PDBsum" id="7OF5"/>
<dbReference type="PDBsum" id="7OF7"/>
<dbReference type="PDBsum" id="7OI6"/>
<dbReference type="PDBsum" id="7OI7"/>
<dbReference type="PDBsum" id="7OI8"/>
<dbReference type="PDBsum" id="7OI9"/>
<dbReference type="PDBsum" id="7OIC"/>
<dbReference type="PDBsum" id="7OID"/>
<dbReference type="PDBsum" id="7OIE"/>
<dbReference type="PDBsum" id="7PD3"/>
<dbReference type="PDBsum" id="7PO4"/>
<dbReference type="PDBsum" id="7QH6"/>
<dbReference type="PDBsum" id="7QH7"/>
<dbReference type="PDBsum" id="8K2B"/>
<dbReference type="PDBsum" id="8PK0"/>
<dbReference type="PDBsum" id="8QSJ"/>
<dbReference type="PDBsum" id="8QU5"/>
<dbReference type="EMDB" id="EMD-11643"/>
<dbReference type="EMDB" id="EMD-11645"/>
<dbReference type="EMDB" id="EMD-12763"/>
<dbReference type="EMDB" id="EMD-12764"/>
<dbReference type="EMDB" id="EMD-12845"/>
<dbReference type="EMDB" id="EMD-12846"/>
<dbReference type="EMDB" id="EMD-12847"/>
<dbReference type="EMDB" id="EMD-12865"/>
<dbReference type="EMDB" id="EMD-12867"/>
<dbReference type="EMDB" id="EMD-12868"/>
<dbReference type="EMDB" id="EMD-12870"/>
<dbReference type="EMDB" id="EMD-12872"/>
<dbReference type="EMDB" id="EMD-12919"/>
<dbReference type="EMDB" id="EMD-12920"/>
<dbReference type="EMDB" id="EMD-12921"/>
<dbReference type="EMDB" id="EMD-12922"/>
<dbReference type="EMDB" id="EMD-12925"/>
<dbReference type="EMDB" id="EMD-12926"/>
<dbReference type="EMDB" id="EMD-12927"/>
<dbReference type="EMDB" id="EMD-13329"/>
<dbReference type="EMDB" id="EMD-13562"/>
<dbReference type="EMDB" id="EMD-13965"/>
<dbReference type="EMDB" id="EMD-13967"/>
<dbReference type="EMDB" id="EMD-17719"/>
<dbReference type="EMDB" id="EMD-36837"/>
<dbReference type="EMDB" id="EMD-3842"/>
<dbReference type="EMDB" id="EMD-3843"/>
<dbReference type="SMR" id="Q96EH3"/>
<dbReference type="BioGRID" id="125433">
    <property type="interactions" value="191"/>
</dbReference>
<dbReference type="FunCoup" id="Q96EH3">
    <property type="interactions" value="1318"/>
</dbReference>
<dbReference type="IntAct" id="Q96EH3">
    <property type="interactions" value="164"/>
</dbReference>
<dbReference type="MINT" id="Q96EH3"/>
<dbReference type="STRING" id="9606.ENSP00000419370"/>
<dbReference type="iPTMnet" id="Q96EH3"/>
<dbReference type="PhosphoSitePlus" id="Q96EH3"/>
<dbReference type="BioMuta" id="MALSU1"/>
<dbReference type="DMDM" id="74731563"/>
<dbReference type="jPOST" id="Q96EH3"/>
<dbReference type="MassIVE" id="Q96EH3"/>
<dbReference type="PaxDb" id="9606-ENSP00000419370"/>
<dbReference type="PeptideAtlas" id="Q96EH3"/>
<dbReference type="ProteomicsDB" id="76407"/>
<dbReference type="Pumba" id="Q96EH3"/>
<dbReference type="Antibodypedia" id="12100">
    <property type="antibodies" value="55 antibodies from 14 providers"/>
</dbReference>
<dbReference type="DNASU" id="115416"/>
<dbReference type="Ensembl" id="ENST00000466681.2">
    <property type="protein sequence ID" value="ENSP00000419370.1"/>
    <property type="gene ID" value="ENSG00000156928.5"/>
</dbReference>
<dbReference type="GeneID" id="115416"/>
<dbReference type="KEGG" id="hsa:115416"/>
<dbReference type="MANE-Select" id="ENST00000466681.2">
    <property type="protein sequence ID" value="ENSP00000419370.1"/>
    <property type="RefSeq nucleotide sequence ID" value="NM_138446.2"/>
    <property type="RefSeq protein sequence ID" value="NP_612455.1"/>
</dbReference>
<dbReference type="UCSC" id="uc003swd.2">
    <property type="organism name" value="human"/>
</dbReference>
<dbReference type="AGR" id="HGNC:21721"/>
<dbReference type="CTD" id="115416"/>
<dbReference type="DisGeNET" id="115416"/>
<dbReference type="GeneCards" id="MALSU1"/>
<dbReference type="HGNC" id="HGNC:21721">
    <property type="gene designation" value="MALSU1"/>
</dbReference>
<dbReference type="HPA" id="ENSG00000156928">
    <property type="expression patterns" value="Low tissue specificity"/>
</dbReference>
<dbReference type="MIM" id="614624">
    <property type="type" value="gene"/>
</dbReference>
<dbReference type="neXtProt" id="NX_Q96EH3"/>
<dbReference type="OpenTargets" id="ENSG00000156928"/>
<dbReference type="PharmGKB" id="PA134866345"/>
<dbReference type="VEuPathDB" id="HostDB:ENSG00000156928"/>
<dbReference type="eggNOG" id="KOG3212">
    <property type="taxonomic scope" value="Eukaryota"/>
</dbReference>
<dbReference type="GeneTree" id="ENSGT00390000015035"/>
<dbReference type="HOGENOM" id="CLU_1277285_0_0_1"/>
<dbReference type="InParanoid" id="Q96EH3"/>
<dbReference type="OMA" id="HLKCKHD"/>
<dbReference type="OrthoDB" id="21330at2759"/>
<dbReference type="PAN-GO" id="Q96EH3">
    <property type="GO annotations" value="4 GO annotations based on evolutionary models"/>
</dbReference>
<dbReference type="PhylomeDB" id="Q96EH3"/>
<dbReference type="TreeFam" id="TF326763"/>
<dbReference type="PathwayCommons" id="Q96EH3"/>
<dbReference type="SignaLink" id="Q96EH3"/>
<dbReference type="BioGRID-ORCS" id="115416">
    <property type="hits" value="118 hits in 1158 CRISPR screens"/>
</dbReference>
<dbReference type="ChiTaRS" id="MALSU1">
    <property type="organism name" value="human"/>
</dbReference>
<dbReference type="GeneWiki" id="C7orf30"/>
<dbReference type="GenomeRNAi" id="115416"/>
<dbReference type="Pharos" id="Q96EH3">
    <property type="development level" value="Tbio"/>
</dbReference>
<dbReference type="PRO" id="PR:Q96EH3"/>
<dbReference type="Proteomes" id="UP000005640">
    <property type="component" value="Chromosome 7"/>
</dbReference>
<dbReference type="RNAct" id="Q96EH3">
    <property type="molecule type" value="protein"/>
</dbReference>
<dbReference type="Bgee" id="ENSG00000156928">
    <property type="expression patterns" value="Expressed in sperm and 192 other cell types or tissues"/>
</dbReference>
<dbReference type="GO" id="GO:0005829">
    <property type="term" value="C:cytosol"/>
    <property type="evidence" value="ECO:0000314"/>
    <property type="project" value="HPA"/>
</dbReference>
<dbReference type="GO" id="GO:0005759">
    <property type="term" value="C:mitochondrial matrix"/>
    <property type="evidence" value="ECO:0007669"/>
    <property type="project" value="UniProtKB-SubCell"/>
</dbReference>
<dbReference type="GO" id="GO:0005739">
    <property type="term" value="C:mitochondrion"/>
    <property type="evidence" value="ECO:0000314"/>
    <property type="project" value="UniProtKB"/>
</dbReference>
<dbReference type="GO" id="GO:0140978">
    <property type="term" value="F:mitochondrial large ribosomal subunit binding"/>
    <property type="evidence" value="ECO:0000314"/>
    <property type="project" value="UniProtKB"/>
</dbReference>
<dbReference type="GO" id="GO:0043023">
    <property type="term" value="F:ribosomal large subunit binding"/>
    <property type="evidence" value="ECO:0000318"/>
    <property type="project" value="GO_Central"/>
</dbReference>
<dbReference type="GO" id="GO:0070130">
    <property type="term" value="P:negative regulation of mitochondrial translation"/>
    <property type="evidence" value="ECO:0000314"/>
    <property type="project" value="UniProtKB"/>
</dbReference>
<dbReference type="GO" id="GO:0090071">
    <property type="term" value="P:negative regulation of ribosome biogenesis"/>
    <property type="evidence" value="ECO:0000318"/>
    <property type="project" value="GO_Central"/>
</dbReference>
<dbReference type="GO" id="GO:0017148">
    <property type="term" value="P:negative regulation of translation"/>
    <property type="evidence" value="ECO:0000318"/>
    <property type="project" value="GO_Central"/>
</dbReference>
<dbReference type="GO" id="GO:0042273">
    <property type="term" value="P:ribosomal large subunit biogenesis"/>
    <property type="evidence" value="ECO:0000315"/>
    <property type="project" value="UniProtKB"/>
</dbReference>
<dbReference type="FunFam" id="3.30.460.10:FF:000018">
    <property type="entry name" value="Mitochondrial assembly of ribosomal large subunit 1"/>
    <property type="match status" value="1"/>
</dbReference>
<dbReference type="Gene3D" id="3.30.460.10">
    <property type="entry name" value="Beta Polymerase, domain 2"/>
    <property type="match status" value="1"/>
</dbReference>
<dbReference type="HAMAP" id="MF_01477">
    <property type="entry name" value="Iojap_RsfS"/>
    <property type="match status" value="1"/>
</dbReference>
<dbReference type="InterPro" id="IPR004394">
    <property type="entry name" value="Iojap/RsfS/C7orf30"/>
</dbReference>
<dbReference type="InterPro" id="IPR043519">
    <property type="entry name" value="NT_sf"/>
</dbReference>
<dbReference type="NCBIfam" id="TIGR00090">
    <property type="entry name" value="rsfS_iojap_ybeB"/>
    <property type="match status" value="1"/>
</dbReference>
<dbReference type="PANTHER" id="PTHR21043">
    <property type="entry name" value="IOJAP SUPERFAMILY ORTHOLOG"/>
    <property type="match status" value="1"/>
</dbReference>
<dbReference type="PANTHER" id="PTHR21043:SF0">
    <property type="entry name" value="MITOCHONDRIAL ASSEMBLY OF RIBOSOMAL LARGE SUBUNIT PROTEIN 1"/>
    <property type="match status" value="1"/>
</dbReference>
<dbReference type="Pfam" id="PF02410">
    <property type="entry name" value="RsfS"/>
    <property type="match status" value="1"/>
</dbReference>
<dbReference type="SUPFAM" id="SSF81301">
    <property type="entry name" value="Nucleotidyltransferase"/>
    <property type="match status" value="1"/>
</dbReference>
<feature type="chain" id="PRO_0000228108" description="Mitochondrial assembly of ribosomal large subunit protein 1">
    <location>
        <begin position="1"/>
        <end position="234"/>
    </location>
</feature>
<feature type="region of interest" description="Disordered" evidence="1">
    <location>
        <begin position="63"/>
        <end position="88"/>
    </location>
</feature>
<feature type="helix" evidence="18">
    <location>
        <begin position="94"/>
        <end position="103"/>
    </location>
</feature>
<feature type="strand" evidence="18">
    <location>
        <begin position="107"/>
        <end position="113"/>
    </location>
</feature>
<feature type="strand" evidence="18">
    <location>
        <begin position="118"/>
        <end position="120"/>
    </location>
</feature>
<feature type="strand" evidence="18">
    <location>
        <begin position="122"/>
        <end position="128"/>
    </location>
</feature>
<feature type="helix" evidence="18">
    <location>
        <begin position="132"/>
        <end position="149"/>
    </location>
</feature>
<feature type="strand" evidence="18">
    <location>
        <begin position="152"/>
        <end position="154"/>
    </location>
</feature>
<feature type="strand" evidence="18">
    <location>
        <begin position="162"/>
        <end position="171"/>
    </location>
</feature>
<feature type="strand" evidence="18">
    <location>
        <begin position="173"/>
        <end position="180"/>
    </location>
</feature>
<feature type="helix" evidence="18">
    <location>
        <begin position="182"/>
        <end position="188"/>
    </location>
</feature>
<feature type="helix" evidence="18">
    <location>
        <begin position="190"/>
        <end position="195"/>
    </location>
</feature>
<feature type="strand" evidence="19">
    <location>
        <begin position="197"/>
        <end position="199"/>
    </location>
</feature>
<keyword id="KW-0002">3D-structure</keyword>
<keyword id="KW-0496">Mitochondrion</keyword>
<keyword id="KW-1267">Proteomics identification</keyword>
<keyword id="KW-1185">Reference proteome</keyword>
<keyword id="KW-0690">Ribosome biogenesis</keyword>
<sequence length="234" mass="26170">MGPGGRVARLLAPLMWRRAVSSVAGSAVGAEPGLRLLAVQRLPVGAAFCRACQTPNFVRGLHSEPGLEERAEGTVNEGRPESDAADHTGPKFDIDMMVSLLRQENARDICVIQVPPEMRYTDYFVIVSGTSTRHLHAMAFYVVKMYKHLKCKRDPHVKIEGKDTDDWLCVDFGSMVIHLMLPETREIYELEKLWTLRSYDDQLAQIAPETVPEDFILGIEDDTSSVTPVELKCE</sequence>
<evidence type="ECO:0000256" key="1">
    <source>
        <dbReference type="SAM" id="MobiDB-lite"/>
    </source>
</evidence>
<evidence type="ECO:0000269" key="2">
    <source>
    </source>
</evidence>
<evidence type="ECO:0000269" key="3">
    <source>
    </source>
</evidence>
<evidence type="ECO:0000269" key="4">
    <source>
    </source>
</evidence>
<evidence type="ECO:0000269" key="5">
    <source>
    </source>
</evidence>
<evidence type="ECO:0000269" key="6">
    <source>
    </source>
</evidence>
<evidence type="ECO:0000269" key="7">
    <source>
    </source>
</evidence>
<evidence type="ECO:0000269" key="8">
    <source>
    </source>
</evidence>
<evidence type="ECO:0000269" key="9">
    <source>
    </source>
</evidence>
<evidence type="ECO:0000269" key="10">
    <source>
    </source>
</evidence>
<evidence type="ECO:0000305" key="11"/>
<evidence type="ECO:0000305" key="12">
    <source>
    </source>
</evidence>
<evidence type="ECO:0000305" key="13">
    <source>
    </source>
</evidence>
<evidence type="ECO:0007744" key="14">
    <source>
        <dbReference type="PDB" id="5OOL"/>
    </source>
</evidence>
<evidence type="ECO:0007744" key="15">
    <source>
        <dbReference type="PDB" id="5OOM"/>
    </source>
</evidence>
<evidence type="ECO:0007744" key="16">
    <source>
        <dbReference type="PDB" id="7QH6"/>
    </source>
</evidence>
<evidence type="ECO:0007744" key="17">
    <source>
        <dbReference type="PDB" id="7QH7"/>
    </source>
</evidence>
<evidence type="ECO:0007829" key="18">
    <source>
        <dbReference type="PDB" id="7OF0"/>
    </source>
</evidence>
<evidence type="ECO:0007829" key="19">
    <source>
        <dbReference type="PDB" id="8QU5"/>
    </source>
</evidence>
<name>MASU1_HUMAN</name>
<proteinExistence type="evidence at protein level"/>
<protein>
    <recommendedName>
        <fullName>Mitochondrial assembly of ribosomal large subunit protein 1</fullName>
    </recommendedName>
</protein>
<gene>
    <name type="primary">MALSU1</name>
    <name type="synonym">C7orf30</name>
</gene>
<comment type="function">
    <text evidence="3 4 6 12 13">Required for normal mitochondrial ribosome function and mitochondrial translation (PubMed:22238375, PubMed:23171548). May play a role in ribosome biogenesis by preventing premature association of the 28S and 39S ribosomal subunits (Probable). Interacts with mitochondrial ribosomal protein uL14m (MRPL14), probably blocking formation of intersubunit bridge B8, preventing association of the 28S and 39S ribosomal subunits (Probable). Addition to isolated mitochondrial ribosomal subunits partially inhibits translation, probably by interfering with the association of the 28S and 39S ribosomal subunits and the formation of functional ribosomes (Probable). May also participate in the assembly and/or regulation of the stability of the large subunit of the mitochondrial ribosome (PubMed:22238376, PubMed:23171548). May function as a ribosomal silencing factor (Probable).</text>
</comment>
<comment type="subunit">
    <text evidence="3 4 5 6 7 8 9 10">Associates with the mitochondrial ribosome large subunit (39S) via interaction with MRPL12 and/or MRPL14 (PubMed:22238375, PubMed:23171548, PubMed:28892042, PubMed:35177605). The interaction generates steric hindrance that is expected to prevent premature association of the 28S and 39S ribosomal subunits (PubMed:28892042). Interacts with intermediates of the mitochondrial ribosome large subunit (mt-LSU) (recruits the mitochondrial ribosome and complex I assembly factor AltMIEF1 and NDUFAB1); regulates mitochondrial ribosomes assembly (PubMed:22238376, PubMed:28892042, PubMed:30215512, PubMed:31666358, PubMed:35177605). Interacts with MRPL12 and MRPL14 (PubMed:22238375, PubMed:22829778, PubMed:23171548).</text>
</comment>
<comment type="interaction">
    <interactant intactId="EBI-2339737">
        <id>Q96EH3</id>
    </interactant>
    <interactant intactId="EBI-739870">
        <id>P32321</id>
        <label>DCTD</label>
    </interactant>
    <organismsDiffer>false</organismsDiffer>
    <experiments>6</experiments>
</comment>
<comment type="interaction">
    <interactant intactId="EBI-2339737">
        <id>Q96EH3</id>
    </interactant>
    <interactant intactId="EBI-466029">
        <id>P42858</id>
        <label>HTT</label>
    </interactant>
    <organismsDiffer>false</organismsDiffer>
    <experiments>6</experiments>
</comment>
<comment type="interaction">
    <interactant intactId="EBI-2339737">
        <id>Q96EH3</id>
    </interactant>
    <interactant intactId="EBI-6509505">
        <id>Q0VD86</id>
        <label>INCA1</label>
    </interactant>
    <organismsDiffer>false</organismsDiffer>
    <experiments>3</experiments>
</comment>
<comment type="interaction">
    <interactant intactId="EBI-2339737">
        <id>Q96EH3</id>
    </interactant>
    <interactant intactId="EBI-11742507">
        <id>Q8TAP4-4</id>
        <label>LMO3</label>
    </interactant>
    <organismsDiffer>false</organismsDiffer>
    <experiments>3</experiments>
</comment>
<comment type="interaction">
    <interactant intactId="EBI-2339737">
        <id>Q96EH3</id>
    </interactant>
    <interactant intactId="EBI-16439278">
        <id>Q6FHY5</id>
        <label>MEOX2</label>
    </interactant>
    <organismsDiffer>false</organismsDiffer>
    <experiments>3</experiments>
</comment>
<comment type="interaction">
    <interactant intactId="EBI-2339737">
        <id>Q96EH3</id>
    </interactant>
    <interactant intactId="EBI-9088235">
        <id>A2RUH7</id>
        <label>MYBPHL</label>
    </interactant>
    <organismsDiffer>false</organismsDiffer>
    <experiments>3</experiments>
</comment>
<comment type="interaction">
    <interactant intactId="EBI-2339737">
        <id>Q96EH3</id>
    </interactant>
    <interactant intactId="EBI-741158">
        <id>Q96HA8</id>
        <label>NTAQ1</label>
    </interactant>
    <organismsDiffer>false</organismsDiffer>
    <experiments>3</experiments>
</comment>
<comment type="interaction">
    <interactant intactId="EBI-2339737">
        <id>Q96EH3</id>
    </interactant>
    <interactant intactId="EBI-949255">
        <id>Q58EX7</id>
        <label>PLEKHG4</label>
    </interactant>
    <organismsDiffer>false</organismsDiffer>
    <experiments>3</experiments>
</comment>
<comment type="interaction">
    <interactant intactId="EBI-2339737">
        <id>Q96EH3</id>
    </interactant>
    <interactant intactId="EBI-11175533">
        <id>Q3SY56</id>
        <label>SP6</label>
    </interactant>
    <organismsDiffer>false</organismsDiffer>
    <experiments>3</experiments>
</comment>
<comment type="interaction">
    <interactant intactId="EBI-2339737">
        <id>Q96EH3</id>
    </interactant>
    <interactant intactId="EBI-11419867">
        <id>Q8TF47</id>
        <label>ZFP90</label>
    </interactant>
    <organismsDiffer>false</organismsDiffer>
    <experiments>3</experiments>
</comment>
<comment type="interaction">
    <interactant intactId="EBI-2339737">
        <id>Q96EH3</id>
    </interactant>
    <interactant intactId="EBI-743265">
        <id>Q9BUY5</id>
        <label>ZNF426</label>
    </interactant>
    <organismsDiffer>false</organismsDiffer>
    <experiments>3</experiments>
</comment>
<comment type="subcellular location">
    <subcellularLocation>
        <location evidence="2 3 4 5 6 13">Mitochondrion matrix</location>
    </subcellularLocation>
    <text evidence="3 5">Colocalizes with MRPL12 and/or MRPL14.</text>
</comment>
<comment type="similarity">
    <text evidence="11">Belongs to the Iojap/RsfS family.</text>
</comment>
<accession>Q96EH3</accession>
<accession>A4D154</accession>